<name>ARGA_YERP3</name>
<reference key="1">
    <citation type="journal article" date="2007" name="PLoS Genet.">
        <title>The complete genome sequence of Yersinia pseudotuberculosis IP31758, the causative agent of Far East scarlet-like fever.</title>
        <authorList>
            <person name="Eppinger M."/>
            <person name="Rosovitz M.J."/>
            <person name="Fricke W.F."/>
            <person name="Rasko D.A."/>
            <person name="Kokorina G."/>
            <person name="Fayolle C."/>
            <person name="Lindler L.E."/>
            <person name="Carniel E."/>
            <person name="Ravel J."/>
        </authorList>
    </citation>
    <scope>NUCLEOTIDE SEQUENCE [LARGE SCALE GENOMIC DNA]</scope>
    <source>
        <strain>IP 31758</strain>
    </source>
</reference>
<gene>
    <name evidence="1" type="primary">argA</name>
    <name type="ordered locus">YpsIP31758_0993</name>
</gene>
<evidence type="ECO:0000255" key="1">
    <source>
        <dbReference type="HAMAP-Rule" id="MF_01105"/>
    </source>
</evidence>
<organism>
    <name type="scientific">Yersinia pseudotuberculosis serotype O:1b (strain IP 31758)</name>
    <dbReference type="NCBI Taxonomy" id="349747"/>
    <lineage>
        <taxon>Bacteria</taxon>
        <taxon>Pseudomonadati</taxon>
        <taxon>Pseudomonadota</taxon>
        <taxon>Gammaproteobacteria</taxon>
        <taxon>Enterobacterales</taxon>
        <taxon>Yersiniaceae</taxon>
        <taxon>Yersinia</taxon>
    </lineage>
</organism>
<comment type="catalytic activity">
    <reaction evidence="1">
        <text>L-glutamate + acetyl-CoA = N-acetyl-L-glutamate + CoA + H(+)</text>
        <dbReference type="Rhea" id="RHEA:24292"/>
        <dbReference type="ChEBI" id="CHEBI:15378"/>
        <dbReference type="ChEBI" id="CHEBI:29985"/>
        <dbReference type="ChEBI" id="CHEBI:44337"/>
        <dbReference type="ChEBI" id="CHEBI:57287"/>
        <dbReference type="ChEBI" id="CHEBI:57288"/>
        <dbReference type="EC" id="2.3.1.1"/>
    </reaction>
</comment>
<comment type="pathway">
    <text evidence="1">Amino-acid biosynthesis; L-arginine biosynthesis; N(2)-acetyl-L-ornithine from L-glutamate: step 1/4.</text>
</comment>
<comment type="subunit">
    <text evidence="1">Homohexamer.</text>
</comment>
<comment type="subcellular location">
    <subcellularLocation>
        <location evidence="1">Cytoplasm</location>
    </subcellularLocation>
</comment>
<comment type="similarity">
    <text evidence="1">Belongs to the acetyltransferase family. ArgA subfamily.</text>
</comment>
<protein>
    <recommendedName>
        <fullName evidence="1">Amino-acid acetyltransferase</fullName>
        <ecNumber evidence="1">2.3.1.1</ecNumber>
    </recommendedName>
    <alternativeName>
        <fullName evidence="1">N-acetylglutamate synthase</fullName>
        <shortName evidence="1">AGS</shortName>
        <shortName evidence="1">NAGS</shortName>
    </alternativeName>
</protein>
<feature type="chain" id="PRO_1000084825" description="Amino-acid acetyltransferase">
    <location>
        <begin position="1"/>
        <end position="441"/>
    </location>
</feature>
<feature type="domain" description="N-acetyltransferase" evidence="1">
    <location>
        <begin position="295"/>
        <end position="434"/>
    </location>
</feature>
<keyword id="KW-0012">Acyltransferase</keyword>
<keyword id="KW-0028">Amino-acid biosynthesis</keyword>
<keyword id="KW-0055">Arginine biosynthesis</keyword>
<keyword id="KW-0963">Cytoplasm</keyword>
<keyword id="KW-0808">Transferase</keyword>
<proteinExistence type="inferred from homology"/>
<accession>A7FFE9</accession>
<dbReference type="EC" id="2.3.1.1" evidence="1"/>
<dbReference type="EMBL" id="CP000720">
    <property type="protein sequence ID" value="ABS48907.1"/>
    <property type="molecule type" value="Genomic_DNA"/>
</dbReference>
<dbReference type="RefSeq" id="WP_002211624.1">
    <property type="nucleotide sequence ID" value="NC_009708.1"/>
</dbReference>
<dbReference type="SMR" id="A7FFE9"/>
<dbReference type="GeneID" id="96662393"/>
<dbReference type="KEGG" id="ypi:YpsIP31758_0993"/>
<dbReference type="HOGENOM" id="CLU_024773_0_0_6"/>
<dbReference type="UniPathway" id="UPA00068">
    <property type="reaction ID" value="UER00106"/>
</dbReference>
<dbReference type="Proteomes" id="UP000002412">
    <property type="component" value="Chromosome"/>
</dbReference>
<dbReference type="GO" id="GO:0005737">
    <property type="term" value="C:cytoplasm"/>
    <property type="evidence" value="ECO:0007669"/>
    <property type="project" value="UniProtKB-SubCell"/>
</dbReference>
<dbReference type="GO" id="GO:0004042">
    <property type="term" value="F:L-glutamate N-acetyltransferase activity"/>
    <property type="evidence" value="ECO:0007669"/>
    <property type="project" value="UniProtKB-UniRule"/>
</dbReference>
<dbReference type="GO" id="GO:0006526">
    <property type="term" value="P:L-arginine biosynthetic process"/>
    <property type="evidence" value="ECO:0007669"/>
    <property type="project" value="UniProtKB-UniRule"/>
</dbReference>
<dbReference type="CDD" id="cd04237">
    <property type="entry name" value="AAK_NAGS-ABP"/>
    <property type="match status" value="1"/>
</dbReference>
<dbReference type="CDD" id="cd04301">
    <property type="entry name" value="NAT_SF"/>
    <property type="match status" value="1"/>
</dbReference>
<dbReference type="FunFam" id="3.40.1160.10:FF:000005">
    <property type="entry name" value="Amino-acid acetyltransferase"/>
    <property type="match status" value="1"/>
</dbReference>
<dbReference type="FunFam" id="3.40.630.30:FF:000009">
    <property type="entry name" value="Amino-acid acetyltransferase"/>
    <property type="match status" value="1"/>
</dbReference>
<dbReference type="Gene3D" id="3.40.630.30">
    <property type="match status" value="1"/>
</dbReference>
<dbReference type="Gene3D" id="3.40.1160.10">
    <property type="entry name" value="Acetylglutamate kinase-like"/>
    <property type="match status" value="1"/>
</dbReference>
<dbReference type="HAMAP" id="MF_01105">
    <property type="entry name" value="N_acetyl_glu_synth"/>
    <property type="match status" value="1"/>
</dbReference>
<dbReference type="InterPro" id="IPR036393">
    <property type="entry name" value="AceGlu_kinase-like_sf"/>
</dbReference>
<dbReference type="InterPro" id="IPR016181">
    <property type="entry name" value="Acyl_CoA_acyltransferase"/>
</dbReference>
<dbReference type="InterPro" id="IPR001048">
    <property type="entry name" value="Asp/Glu/Uridylate_kinase"/>
</dbReference>
<dbReference type="InterPro" id="IPR000182">
    <property type="entry name" value="GNAT_dom"/>
</dbReference>
<dbReference type="InterPro" id="IPR033719">
    <property type="entry name" value="NAGS_kin"/>
</dbReference>
<dbReference type="InterPro" id="IPR010167">
    <property type="entry name" value="NH2A_AcTrfase"/>
</dbReference>
<dbReference type="NCBIfam" id="TIGR01890">
    <property type="entry name" value="N-Ac-Glu-synth"/>
    <property type="match status" value="1"/>
</dbReference>
<dbReference type="NCBIfam" id="NF003641">
    <property type="entry name" value="PRK05279.1"/>
    <property type="match status" value="1"/>
</dbReference>
<dbReference type="PANTHER" id="PTHR30602">
    <property type="entry name" value="AMINO-ACID ACETYLTRANSFERASE"/>
    <property type="match status" value="1"/>
</dbReference>
<dbReference type="PANTHER" id="PTHR30602:SF12">
    <property type="entry name" value="AMINO-ACID ACETYLTRANSFERASE NAGS1, CHLOROPLASTIC-RELATED"/>
    <property type="match status" value="1"/>
</dbReference>
<dbReference type="Pfam" id="PF00696">
    <property type="entry name" value="AA_kinase"/>
    <property type="match status" value="1"/>
</dbReference>
<dbReference type="Pfam" id="PF00583">
    <property type="entry name" value="Acetyltransf_1"/>
    <property type="match status" value="1"/>
</dbReference>
<dbReference type="PIRSF" id="PIRSF000423">
    <property type="entry name" value="ArgA"/>
    <property type="match status" value="1"/>
</dbReference>
<dbReference type="SUPFAM" id="SSF55729">
    <property type="entry name" value="Acyl-CoA N-acyltransferases (Nat)"/>
    <property type="match status" value="1"/>
</dbReference>
<dbReference type="SUPFAM" id="SSF53633">
    <property type="entry name" value="Carbamate kinase-like"/>
    <property type="match status" value="1"/>
</dbReference>
<dbReference type="PROSITE" id="PS51186">
    <property type="entry name" value="GNAT"/>
    <property type="match status" value="1"/>
</dbReference>
<sequence length="441" mass="49355">MKERSTELVQGFRHSVPYINAHRGKTFVVMLGGEAIEHENFSSIVNDIGLLHSLGIRLVVVYGARPQIDSNLADHNYEPIYHKHTRVTDARTLEMVKQAAGLLQLDITARLSMSLNNTPLQGAHINVVSGNFIIAQPLGVDDGVDYCHSGRIRRIDEEAIHRQLDNGAIVLLGPVAVSVTGESFNLTSEEVATQLAIKLKAEKMIGFCSSQGVTDSEGNIISELFPNDAQKRIEDLEQDGDYNSGTVRFLRGAVKACRSGVRRSHLLSYQEDGALIQELFSRDGIGTQIVMESAEQVRRATINDIGGILELIRPLEQQGILVRRSREQLEMEIDKFTIIERDNLTIACAALYPFPDEHIGEMACVAVHPDYRSSSRGEMLLNRITNQARQMGLKKLFVLTTRSIHWFQERGFTPAEVDVLPIQKQELYNYQRRSKILLADL</sequence>